<keyword id="KW-0342">GTP-binding</keyword>
<keyword id="KW-0378">Hydrolase</keyword>
<keyword id="KW-0479">Metal-binding</keyword>
<keyword id="KW-0547">Nucleotide-binding</keyword>
<keyword id="KW-0554">One-carbon metabolism</keyword>
<keyword id="KW-1185">Reference proteome</keyword>
<keyword id="KW-0862">Zinc</keyword>
<organism>
    <name type="scientific">Xanthomonas campestris pv. campestris (strain ATCC 33913 / DSM 3586 / NCPPB 528 / LMG 568 / P 25)</name>
    <dbReference type="NCBI Taxonomy" id="190485"/>
    <lineage>
        <taxon>Bacteria</taxon>
        <taxon>Pseudomonadati</taxon>
        <taxon>Pseudomonadota</taxon>
        <taxon>Gammaproteobacteria</taxon>
        <taxon>Lysobacterales</taxon>
        <taxon>Lysobacteraceae</taxon>
        <taxon>Xanthomonas</taxon>
    </lineage>
</organism>
<gene>
    <name evidence="2" type="primary">folE</name>
    <name type="ordered locus">XCC4166</name>
</gene>
<evidence type="ECO:0000250" key="1"/>
<evidence type="ECO:0000255" key="2">
    <source>
        <dbReference type="HAMAP-Rule" id="MF_00223"/>
    </source>
</evidence>
<evidence type="ECO:0000305" key="3"/>
<sequence length="200" mass="22556">MSQSDQPDSSVTQAQAEEAVRTLLRWAGEDPAREGLLDTPRRVAEAYGDWFSGYREEPRAYLERTFEEVAGYDELIVLRDISYESHCEHHMAPIIGKVHVGYLPRGKVVGISKLARVVESYARRFQVQEKMTAQIAQCIQDVLQPRGVGVVVEGAHECMTTRGIHKRGVSMVTSKMLGSFREDARTRAEFLQFIEVGGKR</sequence>
<protein>
    <recommendedName>
        <fullName evidence="2">GTP cyclohydrolase 1</fullName>
        <ecNumber evidence="2">3.5.4.16</ecNumber>
    </recommendedName>
    <alternativeName>
        <fullName evidence="2">GTP cyclohydrolase I</fullName>
        <shortName evidence="2">GTP-CH-I</shortName>
    </alternativeName>
</protein>
<dbReference type="EC" id="3.5.4.16" evidence="2"/>
<dbReference type="EMBL" id="AE008922">
    <property type="protein sequence ID" value="AAM43382.1"/>
    <property type="status" value="ALT_INIT"/>
    <property type="molecule type" value="Genomic_DNA"/>
</dbReference>
<dbReference type="RefSeq" id="NP_639500.1">
    <property type="nucleotide sequence ID" value="NC_003902.1"/>
</dbReference>
<dbReference type="RefSeq" id="WP_016945065.1">
    <property type="nucleotide sequence ID" value="NC_003902.1"/>
</dbReference>
<dbReference type="SMR" id="Q8P3B0"/>
<dbReference type="STRING" id="190485.XCC4166"/>
<dbReference type="EnsemblBacteria" id="AAM43382">
    <property type="protein sequence ID" value="AAM43382"/>
    <property type="gene ID" value="XCC4166"/>
</dbReference>
<dbReference type="GeneID" id="58015486"/>
<dbReference type="KEGG" id="xcc:XCC4166"/>
<dbReference type="PATRIC" id="fig|190485.4.peg.4463"/>
<dbReference type="eggNOG" id="COG0302">
    <property type="taxonomic scope" value="Bacteria"/>
</dbReference>
<dbReference type="HOGENOM" id="CLU_049768_3_1_6"/>
<dbReference type="OrthoDB" id="9801207at2"/>
<dbReference type="UniPathway" id="UPA00848">
    <property type="reaction ID" value="UER00151"/>
</dbReference>
<dbReference type="Proteomes" id="UP000001010">
    <property type="component" value="Chromosome"/>
</dbReference>
<dbReference type="GO" id="GO:0005737">
    <property type="term" value="C:cytoplasm"/>
    <property type="evidence" value="ECO:0000318"/>
    <property type="project" value="GO_Central"/>
</dbReference>
<dbReference type="GO" id="GO:0005525">
    <property type="term" value="F:GTP binding"/>
    <property type="evidence" value="ECO:0000318"/>
    <property type="project" value="GO_Central"/>
</dbReference>
<dbReference type="GO" id="GO:0003934">
    <property type="term" value="F:GTP cyclohydrolase I activity"/>
    <property type="evidence" value="ECO:0000318"/>
    <property type="project" value="GO_Central"/>
</dbReference>
<dbReference type="GO" id="GO:0008270">
    <property type="term" value="F:zinc ion binding"/>
    <property type="evidence" value="ECO:0000318"/>
    <property type="project" value="GO_Central"/>
</dbReference>
<dbReference type="GO" id="GO:0006730">
    <property type="term" value="P:one-carbon metabolic process"/>
    <property type="evidence" value="ECO:0007669"/>
    <property type="project" value="UniProtKB-UniRule"/>
</dbReference>
<dbReference type="GO" id="GO:0006729">
    <property type="term" value="P:tetrahydrobiopterin biosynthetic process"/>
    <property type="evidence" value="ECO:0000318"/>
    <property type="project" value="GO_Central"/>
</dbReference>
<dbReference type="GO" id="GO:0046654">
    <property type="term" value="P:tetrahydrofolate biosynthetic process"/>
    <property type="evidence" value="ECO:0007669"/>
    <property type="project" value="UniProtKB-UniRule"/>
</dbReference>
<dbReference type="FunFam" id="1.10.286.10:FF:000001">
    <property type="entry name" value="GTP cyclohydrolase 1"/>
    <property type="match status" value="1"/>
</dbReference>
<dbReference type="FunFam" id="3.30.1130.10:FF:000001">
    <property type="entry name" value="GTP cyclohydrolase 1"/>
    <property type="match status" value="1"/>
</dbReference>
<dbReference type="Gene3D" id="1.10.286.10">
    <property type="match status" value="1"/>
</dbReference>
<dbReference type="Gene3D" id="3.30.1130.10">
    <property type="match status" value="1"/>
</dbReference>
<dbReference type="HAMAP" id="MF_00223">
    <property type="entry name" value="FolE"/>
    <property type="match status" value="1"/>
</dbReference>
<dbReference type="InterPro" id="IPR043133">
    <property type="entry name" value="GTP-CH-I_C/QueF"/>
</dbReference>
<dbReference type="InterPro" id="IPR043134">
    <property type="entry name" value="GTP-CH-I_N"/>
</dbReference>
<dbReference type="InterPro" id="IPR001474">
    <property type="entry name" value="GTP_CycHdrlase_I"/>
</dbReference>
<dbReference type="InterPro" id="IPR018234">
    <property type="entry name" value="GTP_CycHdrlase_I_CS"/>
</dbReference>
<dbReference type="InterPro" id="IPR020602">
    <property type="entry name" value="GTP_CycHdrlase_I_dom"/>
</dbReference>
<dbReference type="NCBIfam" id="TIGR00063">
    <property type="entry name" value="folE"/>
    <property type="match status" value="1"/>
</dbReference>
<dbReference type="NCBIfam" id="NF006825">
    <property type="entry name" value="PRK09347.1-2"/>
    <property type="match status" value="1"/>
</dbReference>
<dbReference type="NCBIfam" id="NF006826">
    <property type="entry name" value="PRK09347.1-3"/>
    <property type="match status" value="1"/>
</dbReference>
<dbReference type="PANTHER" id="PTHR11109:SF7">
    <property type="entry name" value="GTP CYCLOHYDROLASE 1"/>
    <property type="match status" value="1"/>
</dbReference>
<dbReference type="PANTHER" id="PTHR11109">
    <property type="entry name" value="GTP CYCLOHYDROLASE I"/>
    <property type="match status" value="1"/>
</dbReference>
<dbReference type="Pfam" id="PF01227">
    <property type="entry name" value="GTP_cyclohydroI"/>
    <property type="match status" value="1"/>
</dbReference>
<dbReference type="SUPFAM" id="SSF55620">
    <property type="entry name" value="Tetrahydrobiopterin biosynthesis enzymes-like"/>
    <property type="match status" value="1"/>
</dbReference>
<dbReference type="PROSITE" id="PS00859">
    <property type="entry name" value="GTP_CYCLOHYDROL_1_1"/>
    <property type="match status" value="1"/>
</dbReference>
<dbReference type="PROSITE" id="PS00860">
    <property type="entry name" value="GTP_CYCLOHYDROL_1_2"/>
    <property type="match status" value="1"/>
</dbReference>
<name>GCH1_XANCP</name>
<feature type="chain" id="PRO_0000119467" description="GTP cyclohydrolase 1">
    <location>
        <begin position="1"/>
        <end position="200"/>
    </location>
</feature>
<feature type="binding site" evidence="2">
    <location>
        <position position="87"/>
    </location>
    <ligand>
        <name>Zn(2+)</name>
        <dbReference type="ChEBI" id="CHEBI:29105"/>
    </ligand>
</feature>
<feature type="binding site" evidence="2">
    <location>
        <position position="90"/>
    </location>
    <ligand>
        <name>Zn(2+)</name>
        <dbReference type="ChEBI" id="CHEBI:29105"/>
    </ligand>
</feature>
<feature type="binding site" evidence="2">
    <location>
        <position position="158"/>
    </location>
    <ligand>
        <name>Zn(2+)</name>
        <dbReference type="ChEBI" id="CHEBI:29105"/>
    </ligand>
</feature>
<reference key="1">
    <citation type="journal article" date="2002" name="Nature">
        <title>Comparison of the genomes of two Xanthomonas pathogens with differing host specificities.</title>
        <authorList>
            <person name="da Silva A.C.R."/>
            <person name="Ferro J.A."/>
            <person name="Reinach F.C."/>
            <person name="Farah C.S."/>
            <person name="Furlan L.R."/>
            <person name="Quaggio R.B."/>
            <person name="Monteiro-Vitorello C.B."/>
            <person name="Van Sluys M.A."/>
            <person name="Almeida N.F. Jr."/>
            <person name="Alves L.M.C."/>
            <person name="do Amaral A.M."/>
            <person name="Bertolini M.C."/>
            <person name="Camargo L.E.A."/>
            <person name="Camarotte G."/>
            <person name="Cannavan F."/>
            <person name="Cardozo J."/>
            <person name="Chambergo F."/>
            <person name="Ciapina L.P."/>
            <person name="Cicarelli R.M.B."/>
            <person name="Coutinho L.L."/>
            <person name="Cursino-Santos J.R."/>
            <person name="El-Dorry H."/>
            <person name="Faria J.B."/>
            <person name="Ferreira A.J.S."/>
            <person name="Ferreira R.C.C."/>
            <person name="Ferro M.I.T."/>
            <person name="Formighieri E.F."/>
            <person name="Franco M.C."/>
            <person name="Greggio C.C."/>
            <person name="Gruber A."/>
            <person name="Katsuyama A.M."/>
            <person name="Kishi L.T."/>
            <person name="Leite R.P."/>
            <person name="Lemos E.G.M."/>
            <person name="Lemos M.V.F."/>
            <person name="Locali E.C."/>
            <person name="Machado M.A."/>
            <person name="Madeira A.M.B.N."/>
            <person name="Martinez-Rossi N.M."/>
            <person name="Martins E.C."/>
            <person name="Meidanis J."/>
            <person name="Menck C.F.M."/>
            <person name="Miyaki C.Y."/>
            <person name="Moon D.H."/>
            <person name="Moreira L.M."/>
            <person name="Novo M.T.M."/>
            <person name="Okura V.K."/>
            <person name="Oliveira M.C."/>
            <person name="Oliveira V.R."/>
            <person name="Pereira H.A."/>
            <person name="Rossi A."/>
            <person name="Sena J.A.D."/>
            <person name="Silva C."/>
            <person name="de Souza R.F."/>
            <person name="Spinola L.A.F."/>
            <person name="Takita M.A."/>
            <person name="Tamura R.E."/>
            <person name="Teixeira E.C."/>
            <person name="Tezza R.I.D."/>
            <person name="Trindade dos Santos M."/>
            <person name="Truffi D."/>
            <person name="Tsai S.M."/>
            <person name="White F.F."/>
            <person name="Setubal J.C."/>
            <person name="Kitajima J.P."/>
        </authorList>
    </citation>
    <scope>NUCLEOTIDE SEQUENCE [LARGE SCALE GENOMIC DNA]</scope>
    <source>
        <strain>ATCC 33913 / DSM 3586 / NCPPB 528 / LMG 568 / P 25</strain>
    </source>
</reference>
<accession>Q8P3B0</accession>
<comment type="catalytic activity">
    <reaction evidence="2">
        <text>GTP + H2O = 7,8-dihydroneopterin 3'-triphosphate + formate + H(+)</text>
        <dbReference type="Rhea" id="RHEA:17473"/>
        <dbReference type="ChEBI" id="CHEBI:15377"/>
        <dbReference type="ChEBI" id="CHEBI:15378"/>
        <dbReference type="ChEBI" id="CHEBI:15740"/>
        <dbReference type="ChEBI" id="CHEBI:37565"/>
        <dbReference type="ChEBI" id="CHEBI:58462"/>
        <dbReference type="EC" id="3.5.4.16"/>
    </reaction>
</comment>
<comment type="pathway">
    <text evidence="2">Cofactor biosynthesis; 7,8-dihydroneopterin triphosphate biosynthesis; 7,8-dihydroneopterin triphosphate from GTP: step 1/1.</text>
</comment>
<comment type="subunit">
    <text evidence="1">Toroid-shaped homodecamer, composed of two pentamers of five dimers.</text>
</comment>
<comment type="similarity">
    <text evidence="2">Belongs to the GTP cyclohydrolase I family.</text>
</comment>
<comment type="sequence caution" evidence="3">
    <conflict type="erroneous initiation">
        <sequence resource="EMBL-CDS" id="AAM43382"/>
    </conflict>
</comment>
<proteinExistence type="inferred from homology"/>